<dbReference type="EMBL" id="CP000512">
    <property type="protein sequence ID" value="ABM31222.1"/>
    <property type="molecule type" value="Genomic_DNA"/>
</dbReference>
<dbReference type="RefSeq" id="WP_011793793.1">
    <property type="nucleotide sequence ID" value="NC_008752.1"/>
</dbReference>
<dbReference type="SMR" id="A1TJT4"/>
<dbReference type="STRING" id="397945.Aave_0618"/>
<dbReference type="GeneID" id="79790332"/>
<dbReference type="KEGG" id="aav:Aave_0618"/>
<dbReference type="eggNOG" id="COG0098">
    <property type="taxonomic scope" value="Bacteria"/>
</dbReference>
<dbReference type="HOGENOM" id="CLU_065898_2_2_4"/>
<dbReference type="OrthoDB" id="9809045at2"/>
<dbReference type="Proteomes" id="UP000002596">
    <property type="component" value="Chromosome"/>
</dbReference>
<dbReference type="GO" id="GO:0015935">
    <property type="term" value="C:small ribosomal subunit"/>
    <property type="evidence" value="ECO:0007669"/>
    <property type="project" value="InterPro"/>
</dbReference>
<dbReference type="GO" id="GO:0019843">
    <property type="term" value="F:rRNA binding"/>
    <property type="evidence" value="ECO:0007669"/>
    <property type="project" value="UniProtKB-UniRule"/>
</dbReference>
<dbReference type="GO" id="GO:0003735">
    <property type="term" value="F:structural constituent of ribosome"/>
    <property type="evidence" value="ECO:0007669"/>
    <property type="project" value="InterPro"/>
</dbReference>
<dbReference type="GO" id="GO:0006412">
    <property type="term" value="P:translation"/>
    <property type="evidence" value="ECO:0007669"/>
    <property type="project" value="UniProtKB-UniRule"/>
</dbReference>
<dbReference type="FunFam" id="3.30.160.20:FF:000001">
    <property type="entry name" value="30S ribosomal protein S5"/>
    <property type="match status" value="1"/>
</dbReference>
<dbReference type="FunFam" id="3.30.230.10:FF:000002">
    <property type="entry name" value="30S ribosomal protein S5"/>
    <property type="match status" value="1"/>
</dbReference>
<dbReference type="Gene3D" id="3.30.160.20">
    <property type="match status" value="1"/>
</dbReference>
<dbReference type="Gene3D" id="3.30.230.10">
    <property type="match status" value="1"/>
</dbReference>
<dbReference type="HAMAP" id="MF_01307_B">
    <property type="entry name" value="Ribosomal_uS5_B"/>
    <property type="match status" value="1"/>
</dbReference>
<dbReference type="InterPro" id="IPR020568">
    <property type="entry name" value="Ribosomal_Su5_D2-typ_SF"/>
</dbReference>
<dbReference type="InterPro" id="IPR000851">
    <property type="entry name" value="Ribosomal_uS5"/>
</dbReference>
<dbReference type="InterPro" id="IPR005712">
    <property type="entry name" value="Ribosomal_uS5_bac-type"/>
</dbReference>
<dbReference type="InterPro" id="IPR005324">
    <property type="entry name" value="Ribosomal_uS5_C"/>
</dbReference>
<dbReference type="InterPro" id="IPR013810">
    <property type="entry name" value="Ribosomal_uS5_N"/>
</dbReference>
<dbReference type="InterPro" id="IPR018192">
    <property type="entry name" value="Ribosomal_uS5_N_CS"/>
</dbReference>
<dbReference type="InterPro" id="IPR014721">
    <property type="entry name" value="Ribsml_uS5_D2-typ_fold_subgr"/>
</dbReference>
<dbReference type="NCBIfam" id="TIGR01021">
    <property type="entry name" value="rpsE_bact"/>
    <property type="match status" value="1"/>
</dbReference>
<dbReference type="PANTHER" id="PTHR48432">
    <property type="entry name" value="S5 DRBM DOMAIN-CONTAINING PROTEIN"/>
    <property type="match status" value="1"/>
</dbReference>
<dbReference type="PANTHER" id="PTHR48432:SF1">
    <property type="entry name" value="S5 DRBM DOMAIN-CONTAINING PROTEIN"/>
    <property type="match status" value="1"/>
</dbReference>
<dbReference type="Pfam" id="PF00333">
    <property type="entry name" value="Ribosomal_S5"/>
    <property type="match status" value="1"/>
</dbReference>
<dbReference type="Pfam" id="PF03719">
    <property type="entry name" value="Ribosomal_S5_C"/>
    <property type="match status" value="1"/>
</dbReference>
<dbReference type="SUPFAM" id="SSF54768">
    <property type="entry name" value="dsRNA-binding domain-like"/>
    <property type="match status" value="1"/>
</dbReference>
<dbReference type="SUPFAM" id="SSF54211">
    <property type="entry name" value="Ribosomal protein S5 domain 2-like"/>
    <property type="match status" value="1"/>
</dbReference>
<dbReference type="PROSITE" id="PS00585">
    <property type="entry name" value="RIBOSOMAL_S5"/>
    <property type="match status" value="1"/>
</dbReference>
<dbReference type="PROSITE" id="PS50881">
    <property type="entry name" value="S5_DSRBD"/>
    <property type="match status" value="1"/>
</dbReference>
<name>RS5_PARC0</name>
<feature type="chain" id="PRO_0000323052" description="Small ribosomal subunit protein uS5">
    <location>
        <begin position="1"/>
        <end position="172"/>
    </location>
</feature>
<feature type="domain" description="S5 DRBM" evidence="1">
    <location>
        <begin position="17"/>
        <end position="80"/>
    </location>
</feature>
<evidence type="ECO:0000255" key="1">
    <source>
        <dbReference type="HAMAP-Rule" id="MF_01307"/>
    </source>
</evidence>
<evidence type="ECO:0000305" key="2"/>
<sequence>MAKFQPKVQTEGQDDGMREKMIAVNRVTKVVKGGRILGFAALTVVGDGDGRVGMGKGKSKEVPAAVQKAMEECRRNLVKVSLKNGSIHHSVKGHHGAASVELHPAPKGTGIIAGGPMRAVFEVVGITDIVAKSHGSSNPYNMVRATFDALVNSTTPAEVAAKRGKSVEDIFA</sequence>
<protein>
    <recommendedName>
        <fullName evidence="1">Small ribosomal subunit protein uS5</fullName>
    </recommendedName>
    <alternativeName>
        <fullName evidence="2">30S ribosomal protein S5</fullName>
    </alternativeName>
</protein>
<proteinExistence type="inferred from homology"/>
<accession>A1TJT4</accession>
<keyword id="KW-0687">Ribonucleoprotein</keyword>
<keyword id="KW-0689">Ribosomal protein</keyword>
<keyword id="KW-0694">RNA-binding</keyword>
<keyword id="KW-0699">rRNA-binding</keyword>
<gene>
    <name evidence="1" type="primary">rpsE</name>
    <name type="ordered locus">Aave_0618</name>
</gene>
<comment type="function">
    <text evidence="1">With S4 and S12 plays an important role in translational accuracy.</text>
</comment>
<comment type="function">
    <text evidence="1">Located at the back of the 30S subunit body where it stabilizes the conformation of the head with respect to the body.</text>
</comment>
<comment type="subunit">
    <text evidence="1">Part of the 30S ribosomal subunit. Contacts proteins S4 and S8.</text>
</comment>
<comment type="domain">
    <text>The N-terminal domain interacts with the head of the 30S subunit; the C-terminal domain interacts with the body and contacts protein S4. The interaction surface between S4 and S5 is involved in control of translational fidelity.</text>
</comment>
<comment type="similarity">
    <text evidence="1">Belongs to the universal ribosomal protein uS5 family.</text>
</comment>
<reference key="1">
    <citation type="submission" date="2006-12" db="EMBL/GenBank/DDBJ databases">
        <title>Complete sequence of Acidovorax avenae subsp. citrulli AAC00-1.</title>
        <authorList>
            <person name="Copeland A."/>
            <person name="Lucas S."/>
            <person name="Lapidus A."/>
            <person name="Barry K."/>
            <person name="Detter J.C."/>
            <person name="Glavina del Rio T."/>
            <person name="Dalin E."/>
            <person name="Tice H."/>
            <person name="Pitluck S."/>
            <person name="Kiss H."/>
            <person name="Brettin T."/>
            <person name="Bruce D."/>
            <person name="Han C."/>
            <person name="Tapia R."/>
            <person name="Gilna P."/>
            <person name="Schmutz J."/>
            <person name="Larimer F."/>
            <person name="Land M."/>
            <person name="Hauser L."/>
            <person name="Kyrpides N."/>
            <person name="Kim E."/>
            <person name="Stahl D."/>
            <person name="Richardson P."/>
        </authorList>
    </citation>
    <scope>NUCLEOTIDE SEQUENCE [LARGE SCALE GENOMIC DNA]</scope>
    <source>
        <strain>AAC00-1</strain>
    </source>
</reference>
<organism>
    <name type="scientific">Paracidovorax citrulli (strain AAC00-1)</name>
    <name type="common">Acidovorax citrulli</name>
    <dbReference type="NCBI Taxonomy" id="397945"/>
    <lineage>
        <taxon>Bacteria</taxon>
        <taxon>Pseudomonadati</taxon>
        <taxon>Pseudomonadota</taxon>
        <taxon>Betaproteobacteria</taxon>
        <taxon>Burkholderiales</taxon>
        <taxon>Comamonadaceae</taxon>
        <taxon>Paracidovorax</taxon>
    </lineage>
</organism>